<proteinExistence type="inferred from homology"/>
<dbReference type="EC" id="2.3.1.234" evidence="1"/>
<dbReference type="EMBL" id="CP000478">
    <property type="protein sequence ID" value="ABK18984.1"/>
    <property type="molecule type" value="Genomic_DNA"/>
</dbReference>
<dbReference type="RefSeq" id="WP_011700109.1">
    <property type="nucleotide sequence ID" value="NC_008554.1"/>
</dbReference>
<dbReference type="SMR" id="A0LNI2"/>
<dbReference type="FunCoup" id="A0LNI2">
    <property type="interactions" value="533"/>
</dbReference>
<dbReference type="STRING" id="335543.Sfum_3311"/>
<dbReference type="KEGG" id="sfu:Sfum_3311"/>
<dbReference type="eggNOG" id="COG0533">
    <property type="taxonomic scope" value="Bacteria"/>
</dbReference>
<dbReference type="HOGENOM" id="CLU_023208_0_2_7"/>
<dbReference type="InParanoid" id="A0LNI2"/>
<dbReference type="OrthoDB" id="9806197at2"/>
<dbReference type="Proteomes" id="UP000001784">
    <property type="component" value="Chromosome"/>
</dbReference>
<dbReference type="GO" id="GO:0005737">
    <property type="term" value="C:cytoplasm"/>
    <property type="evidence" value="ECO:0007669"/>
    <property type="project" value="UniProtKB-SubCell"/>
</dbReference>
<dbReference type="GO" id="GO:0005506">
    <property type="term" value="F:iron ion binding"/>
    <property type="evidence" value="ECO:0007669"/>
    <property type="project" value="UniProtKB-UniRule"/>
</dbReference>
<dbReference type="GO" id="GO:0061711">
    <property type="term" value="F:N(6)-L-threonylcarbamoyladenine synthase activity"/>
    <property type="evidence" value="ECO:0007669"/>
    <property type="project" value="UniProtKB-EC"/>
</dbReference>
<dbReference type="GO" id="GO:0002949">
    <property type="term" value="P:tRNA threonylcarbamoyladenosine modification"/>
    <property type="evidence" value="ECO:0007669"/>
    <property type="project" value="UniProtKB-UniRule"/>
</dbReference>
<dbReference type="CDD" id="cd24133">
    <property type="entry name" value="ASKHA_NBD_TsaD_bac"/>
    <property type="match status" value="1"/>
</dbReference>
<dbReference type="FunFam" id="3.30.420.40:FF:000012">
    <property type="entry name" value="tRNA N6-adenosine threonylcarbamoyltransferase"/>
    <property type="match status" value="1"/>
</dbReference>
<dbReference type="FunFam" id="3.30.420.40:FF:000040">
    <property type="entry name" value="tRNA N6-adenosine threonylcarbamoyltransferase"/>
    <property type="match status" value="1"/>
</dbReference>
<dbReference type="Gene3D" id="3.30.420.40">
    <property type="match status" value="2"/>
</dbReference>
<dbReference type="HAMAP" id="MF_01445">
    <property type="entry name" value="TsaD"/>
    <property type="match status" value="1"/>
</dbReference>
<dbReference type="InterPro" id="IPR043129">
    <property type="entry name" value="ATPase_NBD"/>
</dbReference>
<dbReference type="InterPro" id="IPR000905">
    <property type="entry name" value="Gcp-like_dom"/>
</dbReference>
<dbReference type="InterPro" id="IPR017861">
    <property type="entry name" value="KAE1/TsaD"/>
</dbReference>
<dbReference type="InterPro" id="IPR017860">
    <property type="entry name" value="Peptidase_M22_CS"/>
</dbReference>
<dbReference type="InterPro" id="IPR022450">
    <property type="entry name" value="TsaD"/>
</dbReference>
<dbReference type="NCBIfam" id="TIGR00329">
    <property type="entry name" value="gcp_kae1"/>
    <property type="match status" value="1"/>
</dbReference>
<dbReference type="NCBIfam" id="TIGR03723">
    <property type="entry name" value="T6A_TsaD_YgjD"/>
    <property type="match status" value="1"/>
</dbReference>
<dbReference type="PANTHER" id="PTHR11735">
    <property type="entry name" value="TRNA N6-ADENOSINE THREONYLCARBAMOYLTRANSFERASE"/>
    <property type="match status" value="1"/>
</dbReference>
<dbReference type="PANTHER" id="PTHR11735:SF6">
    <property type="entry name" value="TRNA N6-ADENOSINE THREONYLCARBAMOYLTRANSFERASE, MITOCHONDRIAL"/>
    <property type="match status" value="1"/>
</dbReference>
<dbReference type="Pfam" id="PF00814">
    <property type="entry name" value="TsaD"/>
    <property type="match status" value="1"/>
</dbReference>
<dbReference type="PRINTS" id="PR00789">
    <property type="entry name" value="OSIALOPTASE"/>
</dbReference>
<dbReference type="SUPFAM" id="SSF53067">
    <property type="entry name" value="Actin-like ATPase domain"/>
    <property type="match status" value="1"/>
</dbReference>
<dbReference type="PROSITE" id="PS01016">
    <property type="entry name" value="GLYCOPROTEASE"/>
    <property type="match status" value="1"/>
</dbReference>
<feature type="chain" id="PRO_0000303590" description="tRNA N6-adenosine threonylcarbamoyltransferase">
    <location>
        <begin position="1"/>
        <end position="339"/>
    </location>
</feature>
<feature type="binding site" evidence="1">
    <location>
        <position position="111"/>
    </location>
    <ligand>
        <name>Fe cation</name>
        <dbReference type="ChEBI" id="CHEBI:24875"/>
    </ligand>
</feature>
<feature type="binding site" evidence="1">
    <location>
        <position position="115"/>
    </location>
    <ligand>
        <name>Fe cation</name>
        <dbReference type="ChEBI" id="CHEBI:24875"/>
    </ligand>
</feature>
<feature type="binding site" evidence="1">
    <location>
        <begin position="134"/>
        <end position="138"/>
    </location>
    <ligand>
        <name>substrate</name>
    </ligand>
</feature>
<feature type="binding site" evidence="1">
    <location>
        <position position="167"/>
    </location>
    <ligand>
        <name>substrate</name>
    </ligand>
</feature>
<feature type="binding site" evidence="1">
    <location>
        <position position="180"/>
    </location>
    <ligand>
        <name>substrate</name>
    </ligand>
</feature>
<feature type="binding site" evidence="1">
    <location>
        <position position="279"/>
    </location>
    <ligand>
        <name>substrate</name>
    </ligand>
</feature>
<feature type="binding site" evidence="1">
    <location>
        <position position="307"/>
    </location>
    <ligand>
        <name>Fe cation</name>
        <dbReference type="ChEBI" id="CHEBI:24875"/>
    </ligand>
</feature>
<sequence length="339" mass="35886">MIILGVESSCDETAAAVVEDGSRVLSDVVASQAALHGPYGGVVPELASRKHVEAILPVLGEAMHEAGVTWGQVDAIAATQGPGLVGALLVGLSAAKALAYALKKPMVAVNHLEGHIQAAFLGREELTRPFVCLVVSGGHTALYRVDPDGTTSFLGSTRDDAAGEAFDKVAKLLALGYPGGVEIERLAAGGDPHAFNFPRAFIDGRSLEFSFSGLKTSVATFVRQHGPPSESGEQGAYRLADLLASFQEAVVEVLVNKTVRAAGMCSVGDIAVVGGVAANLRLRERFEEEAGMHRFELHLPARRYCTDNAVMIAAAAYRTWKRSGFCLDPVDLDARSRWF</sequence>
<protein>
    <recommendedName>
        <fullName evidence="1">tRNA N6-adenosine threonylcarbamoyltransferase</fullName>
        <ecNumber evidence="1">2.3.1.234</ecNumber>
    </recommendedName>
    <alternativeName>
        <fullName evidence="1">N6-L-threonylcarbamoyladenine synthase</fullName>
        <shortName evidence="1">t(6)A synthase</shortName>
    </alternativeName>
    <alternativeName>
        <fullName evidence="1">t(6)A37 threonylcarbamoyladenosine biosynthesis protein TsaD</fullName>
    </alternativeName>
    <alternativeName>
        <fullName evidence="1">tRNA threonylcarbamoyladenosine biosynthesis protein TsaD</fullName>
    </alternativeName>
</protein>
<gene>
    <name evidence="1" type="primary">tsaD</name>
    <name type="synonym">gcp</name>
    <name type="ordered locus">Sfum_3311</name>
</gene>
<comment type="function">
    <text evidence="1">Required for the formation of a threonylcarbamoyl group on adenosine at position 37 (t(6)A37) in tRNAs that read codons beginning with adenine. Is involved in the transfer of the threonylcarbamoyl moiety of threonylcarbamoyl-AMP (TC-AMP) to the N6 group of A37, together with TsaE and TsaB. TsaD likely plays a direct catalytic role in this reaction.</text>
</comment>
<comment type="catalytic activity">
    <reaction evidence="1">
        <text>L-threonylcarbamoyladenylate + adenosine(37) in tRNA = N(6)-L-threonylcarbamoyladenosine(37) in tRNA + AMP + H(+)</text>
        <dbReference type="Rhea" id="RHEA:37059"/>
        <dbReference type="Rhea" id="RHEA-COMP:10162"/>
        <dbReference type="Rhea" id="RHEA-COMP:10163"/>
        <dbReference type="ChEBI" id="CHEBI:15378"/>
        <dbReference type="ChEBI" id="CHEBI:73682"/>
        <dbReference type="ChEBI" id="CHEBI:74411"/>
        <dbReference type="ChEBI" id="CHEBI:74418"/>
        <dbReference type="ChEBI" id="CHEBI:456215"/>
        <dbReference type="EC" id="2.3.1.234"/>
    </reaction>
</comment>
<comment type="cofactor">
    <cofactor evidence="1">
        <name>Fe(2+)</name>
        <dbReference type="ChEBI" id="CHEBI:29033"/>
    </cofactor>
    <text evidence="1">Binds 1 Fe(2+) ion per subunit.</text>
</comment>
<comment type="subcellular location">
    <subcellularLocation>
        <location evidence="1">Cytoplasm</location>
    </subcellularLocation>
</comment>
<comment type="similarity">
    <text evidence="1">Belongs to the KAE1 / TsaD family.</text>
</comment>
<organism>
    <name type="scientific">Syntrophobacter fumaroxidans (strain DSM 10017 / MPOB)</name>
    <dbReference type="NCBI Taxonomy" id="335543"/>
    <lineage>
        <taxon>Bacteria</taxon>
        <taxon>Pseudomonadati</taxon>
        <taxon>Thermodesulfobacteriota</taxon>
        <taxon>Syntrophobacteria</taxon>
        <taxon>Syntrophobacterales</taxon>
        <taxon>Syntrophobacteraceae</taxon>
        <taxon>Syntrophobacter</taxon>
    </lineage>
</organism>
<accession>A0LNI2</accession>
<reference key="1">
    <citation type="submission" date="2006-10" db="EMBL/GenBank/DDBJ databases">
        <title>Complete sequence of Syntrophobacter fumaroxidans MPOB.</title>
        <authorList>
            <consortium name="US DOE Joint Genome Institute"/>
            <person name="Copeland A."/>
            <person name="Lucas S."/>
            <person name="Lapidus A."/>
            <person name="Barry K."/>
            <person name="Detter J.C."/>
            <person name="Glavina del Rio T."/>
            <person name="Hammon N."/>
            <person name="Israni S."/>
            <person name="Pitluck S."/>
            <person name="Goltsman E.G."/>
            <person name="Martinez M."/>
            <person name="Schmutz J."/>
            <person name="Larimer F."/>
            <person name="Land M."/>
            <person name="Hauser L."/>
            <person name="Kyrpides N."/>
            <person name="Kim E."/>
            <person name="Boone D.R."/>
            <person name="Brockman F."/>
            <person name="Culley D."/>
            <person name="Ferry J."/>
            <person name="Gunsalus R."/>
            <person name="McInerney M.J."/>
            <person name="Morrison M."/>
            <person name="Plugge C."/>
            <person name="Rohlin L."/>
            <person name="Scholten J."/>
            <person name="Sieber J."/>
            <person name="Stams A.J.M."/>
            <person name="Worm P."/>
            <person name="Henstra A.M."/>
            <person name="Richardson P."/>
        </authorList>
    </citation>
    <scope>NUCLEOTIDE SEQUENCE [LARGE SCALE GENOMIC DNA]</scope>
    <source>
        <strain>DSM 10017 / MPOB</strain>
    </source>
</reference>
<evidence type="ECO:0000255" key="1">
    <source>
        <dbReference type="HAMAP-Rule" id="MF_01445"/>
    </source>
</evidence>
<keyword id="KW-0012">Acyltransferase</keyword>
<keyword id="KW-0963">Cytoplasm</keyword>
<keyword id="KW-0408">Iron</keyword>
<keyword id="KW-0479">Metal-binding</keyword>
<keyword id="KW-1185">Reference proteome</keyword>
<keyword id="KW-0808">Transferase</keyword>
<keyword id="KW-0819">tRNA processing</keyword>
<name>TSAD_SYNFM</name>